<proteinExistence type="inferred from homology"/>
<keyword id="KW-1185">Reference proteome</keyword>
<keyword id="KW-0732">Signal</keyword>
<dbReference type="EMBL" id="LT708304">
    <property type="protein sequence ID" value="SIU01286.1"/>
    <property type="molecule type" value="Genomic_DNA"/>
</dbReference>
<dbReference type="RefSeq" id="NP_856314.1">
    <property type="nucleotide sequence ID" value="NC_002945.3"/>
</dbReference>
<dbReference type="RefSeq" id="WP_003899405.1">
    <property type="nucleotide sequence ID" value="NC_002945.4"/>
</dbReference>
<dbReference type="KEGG" id="mbo:BQ2027_MB2668"/>
<dbReference type="Proteomes" id="UP000001419">
    <property type="component" value="Chromosome"/>
</dbReference>
<organism>
    <name type="scientific">Mycobacterium bovis (strain ATCC BAA-935 / AF2122/97)</name>
    <dbReference type="NCBI Taxonomy" id="233413"/>
    <lineage>
        <taxon>Bacteria</taxon>
        <taxon>Bacillati</taxon>
        <taxon>Actinomycetota</taxon>
        <taxon>Actinomycetes</taxon>
        <taxon>Mycobacteriales</taxon>
        <taxon>Mycobacteriaceae</taxon>
        <taxon>Mycobacterium</taxon>
        <taxon>Mycobacterium tuberculosis complex</taxon>
    </lineage>
</organism>
<sequence length="80" mass="8937">MVAADHRALGSNKSYPASQTAEAIWPPARTLRYDRQSPWLATGFDRRMSQTVTGVGVQNCAVSKRRCSAVDHSSRTPYRR</sequence>
<gene>
    <name type="ordered locus">BQ2027_MB2668</name>
</gene>
<accession>P65038</accession>
<accession>A0A1R3Y2L2</accession>
<accession>P71934</accession>
<accession>X2BL23</accession>
<feature type="signal peptide" evidence="1">
    <location>
        <begin position="1"/>
        <end position="20"/>
    </location>
</feature>
<feature type="chain" id="PRO_0000014145" description="Uncharacterized protein Mb2668">
    <location>
        <begin position="21"/>
        <end position="80"/>
    </location>
</feature>
<feature type="region of interest" description="Disordered" evidence="2">
    <location>
        <begin position="1"/>
        <end position="21"/>
    </location>
</feature>
<feature type="compositionally biased region" description="Polar residues" evidence="2">
    <location>
        <begin position="11"/>
        <end position="21"/>
    </location>
</feature>
<protein>
    <recommendedName>
        <fullName>Uncharacterized protein Mb2668</fullName>
    </recommendedName>
</protein>
<name>Y2668_MYCBO</name>
<evidence type="ECO:0000255" key="1"/>
<evidence type="ECO:0000256" key="2">
    <source>
        <dbReference type="SAM" id="MobiDB-lite"/>
    </source>
</evidence>
<reference key="1">
    <citation type="journal article" date="2003" name="Proc. Natl. Acad. Sci. U.S.A.">
        <title>The complete genome sequence of Mycobacterium bovis.</title>
        <authorList>
            <person name="Garnier T."/>
            <person name="Eiglmeier K."/>
            <person name="Camus J.-C."/>
            <person name="Medina N."/>
            <person name="Mansoor H."/>
            <person name="Pryor M."/>
            <person name="Duthoy S."/>
            <person name="Grondin S."/>
            <person name="Lacroix C."/>
            <person name="Monsempe C."/>
            <person name="Simon S."/>
            <person name="Harris B."/>
            <person name="Atkin R."/>
            <person name="Doggett J."/>
            <person name="Mayes R."/>
            <person name="Keating L."/>
            <person name="Wheeler P.R."/>
            <person name="Parkhill J."/>
            <person name="Barrell B.G."/>
            <person name="Cole S.T."/>
            <person name="Gordon S.V."/>
            <person name="Hewinson R.G."/>
        </authorList>
    </citation>
    <scope>NUCLEOTIDE SEQUENCE [LARGE SCALE GENOMIC DNA]</scope>
    <source>
        <strain>ATCC BAA-935 / AF2122/97</strain>
    </source>
</reference>
<reference key="2">
    <citation type="journal article" date="2017" name="Genome Announc.">
        <title>Updated reference genome sequence and annotation of Mycobacterium bovis AF2122/97.</title>
        <authorList>
            <person name="Malone K.M."/>
            <person name="Farrell D."/>
            <person name="Stuber T.P."/>
            <person name="Schubert O.T."/>
            <person name="Aebersold R."/>
            <person name="Robbe-Austerman S."/>
            <person name="Gordon S.V."/>
        </authorList>
    </citation>
    <scope>NUCLEOTIDE SEQUENCE [LARGE SCALE GENOMIC DNA]</scope>
    <scope>GENOME REANNOTATION</scope>
    <source>
        <strain>ATCC BAA-935 / AF2122/97</strain>
    </source>
</reference>